<keyword id="KW-0067">ATP-binding</keyword>
<keyword id="KW-0436">Ligase</keyword>
<keyword id="KW-0479">Metal-binding</keyword>
<keyword id="KW-0547">Nucleotide-binding</keyword>
<keyword id="KW-0671">Queuosine biosynthesis</keyword>
<keyword id="KW-1185">Reference proteome</keyword>
<keyword id="KW-0862">Zinc</keyword>
<comment type="function">
    <text evidence="1">Catalyzes the ATP-dependent conversion of 7-carboxy-7-deazaguanine (CDG) to 7-cyano-7-deazaguanine (preQ(0)).</text>
</comment>
<comment type="catalytic activity">
    <reaction evidence="1">
        <text>7-carboxy-7-deazaguanine + NH4(+) + ATP = 7-cyano-7-deazaguanine + ADP + phosphate + H2O + H(+)</text>
        <dbReference type="Rhea" id="RHEA:27982"/>
        <dbReference type="ChEBI" id="CHEBI:15377"/>
        <dbReference type="ChEBI" id="CHEBI:15378"/>
        <dbReference type="ChEBI" id="CHEBI:28938"/>
        <dbReference type="ChEBI" id="CHEBI:30616"/>
        <dbReference type="ChEBI" id="CHEBI:43474"/>
        <dbReference type="ChEBI" id="CHEBI:45075"/>
        <dbReference type="ChEBI" id="CHEBI:61036"/>
        <dbReference type="ChEBI" id="CHEBI:456216"/>
        <dbReference type="EC" id="6.3.4.20"/>
    </reaction>
</comment>
<comment type="cofactor">
    <cofactor evidence="1">
        <name>Zn(2+)</name>
        <dbReference type="ChEBI" id="CHEBI:29105"/>
    </cofactor>
    <text evidence="1">Binds 1 zinc ion per subunit.</text>
</comment>
<comment type="pathway">
    <text evidence="1">Purine metabolism; 7-cyano-7-deazaguanine biosynthesis.</text>
</comment>
<comment type="similarity">
    <text evidence="1">Belongs to the QueC family.</text>
</comment>
<proteinExistence type="inferred from homology"/>
<sequence>MSKAVVVFSGGQDSTTCLIQALTQFDEVHAITFDYGQRHNEEIEVAKALASQLRIASHKVMDVSLLNELAISALTRDDIPVSHELMENGLPNTFVPGRNILFLTLAGIYAYQLGANSVITGVCETDFSGYPDCRDQFVRAMETALCLGMDKQINLLTPLMWLNKAETWALADKYHSLTLVKELTLTCYNGIIGQGCGDCPACHLRQKGLDDYLNHKPSVMASLEQKTHGKSA</sequence>
<accession>Q12MM8</accession>
<feature type="chain" id="PRO_1000069800" description="7-cyano-7-deazaguanine synthase">
    <location>
        <begin position="1"/>
        <end position="232"/>
    </location>
</feature>
<feature type="binding site" evidence="1">
    <location>
        <begin position="8"/>
        <end position="18"/>
    </location>
    <ligand>
        <name>ATP</name>
        <dbReference type="ChEBI" id="CHEBI:30616"/>
    </ligand>
</feature>
<feature type="binding site" evidence="1">
    <location>
        <position position="187"/>
    </location>
    <ligand>
        <name>Zn(2+)</name>
        <dbReference type="ChEBI" id="CHEBI:29105"/>
    </ligand>
</feature>
<feature type="binding site" evidence="1">
    <location>
        <position position="196"/>
    </location>
    <ligand>
        <name>Zn(2+)</name>
        <dbReference type="ChEBI" id="CHEBI:29105"/>
    </ligand>
</feature>
<feature type="binding site" evidence="1">
    <location>
        <position position="199"/>
    </location>
    <ligand>
        <name>Zn(2+)</name>
        <dbReference type="ChEBI" id="CHEBI:29105"/>
    </ligand>
</feature>
<feature type="binding site" evidence="1">
    <location>
        <position position="202"/>
    </location>
    <ligand>
        <name>Zn(2+)</name>
        <dbReference type="ChEBI" id="CHEBI:29105"/>
    </ligand>
</feature>
<reference key="1">
    <citation type="submission" date="2006-03" db="EMBL/GenBank/DDBJ databases">
        <title>Complete sequence of Shewanella denitrificans OS217.</title>
        <authorList>
            <consortium name="US DOE Joint Genome Institute"/>
            <person name="Copeland A."/>
            <person name="Lucas S."/>
            <person name="Lapidus A."/>
            <person name="Barry K."/>
            <person name="Detter J.C."/>
            <person name="Glavina del Rio T."/>
            <person name="Hammon N."/>
            <person name="Israni S."/>
            <person name="Dalin E."/>
            <person name="Tice H."/>
            <person name="Pitluck S."/>
            <person name="Brettin T."/>
            <person name="Bruce D."/>
            <person name="Han C."/>
            <person name="Tapia R."/>
            <person name="Gilna P."/>
            <person name="Kiss H."/>
            <person name="Schmutz J."/>
            <person name="Larimer F."/>
            <person name="Land M."/>
            <person name="Hauser L."/>
            <person name="Kyrpides N."/>
            <person name="Lykidis A."/>
            <person name="Richardson P."/>
        </authorList>
    </citation>
    <scope>NUCLEOTIDE SEQUENCE [LARGE SCALE GENOMIC DNA]</scope>
    <source>
        <strain>OS217 / ATCC BAA-1090 / DSM 15013</strain>
    </source>
</reference>
<gene>
    <name evidence="1" type="primary">queC</name>
    <name type="ordered locus">Sden_2015</name>
</gene>
<dbReference type="EC" id="6.3.4.20" evidence="1"/>
<dbReference type="EMBL" id="CP000302">
    <property type="protein sequence ID" value="ABE55298.1"/>
    <property type="molecule type" value="Genomic_DNA"/>
</dbReference>
<dbReference type="RefSeq" id="WP_011496454.1">
    <property type="nucleotide sequence ID" value="NC_007954.1"/>
</dbReference>
<dbReference type="SMR" id="Q12MM8"/>
<dbReference type="STRING" id="318161.Sden_2015"/>
<dbReference type="KEGG" id="sdn:Sden_2015"/>
<dbReference type="eggNOG" id="COG0603">
    <property type="taxonomic scope" value="Bacteria"/>
</dbReference>
<dbReference type="HOGENOM" id="CLU_081854_0_0_6"/>
<dbReference type="OrthoDB" id="9789567at2"/>
<dbReference type="UniPathway" id="UPA00391"/>
<dbReference type="Proteomes" id="UP000001982">
    <property type="component" value="Chromosome"/>
</dbReference>
<dbReference type="GO" id="GO:0005524">
    <property type="term" value="F:ATP binding"/>
    <property type="evidence" value="ECO:0007669"/>
    <property type="project" value="UniProtKB-UniRule"/>
</dbReference>
<dbReference type="GO" id="GO:0016879">
    <property type="term" value="F:ligase activity, forming carbon-nitrogen bonds"/>
    <property type="evidence" value="ECO:0007669"/>
    <property type="project" value="UniProtKB-UniRule"/>
</dbReference>
<dbReference type="GO" id="GO:0008270">
    <property type="term" value="F:zinc ion binding"/>
    <property type="evidence" value="ECO:0007669"/>
    <property type="project" value="UniProtKB-UniRule"/>
</dbReference>
<dbReference type="GO" id="GO:0008616">
    <property type="term" value="P:queuosine biosynthetic process"/>
    <property type="evidence" value="ECO:0007669"/>
    <property type="project" value="UniProtKB-UniRule"/>
</dbReference>
<dbReference type="CDD" id="cd01995">
    <property type="entry name" value="QueC-like"/>
    <property type="match status" value="1"/>
</dbReference>
<dbReference type="FunFam" id="3.40.50.620:FF:000017">
    <property type="entry name" value="7-cyano-7-deazaguanine synthase"/>
    <property type="match status" value="1"/>
</dbReference>
<dbReference type="Gene3D" id="3.40.50.620">
    <property type="entry name" value="HUPs"/>
    <property type="match status" value="1"/>
</dbReference>
<dbReference type="HAMAP" id="MF_01633">
    <property type="entry name" value="QueC"/>
    <property type="match status" value="1"/>
</dbReference>
<dbReference type="InterPro" id="IPR018317">
    <property type="entry name" value="QueC"/>
</dbReference>
<dbReference type="InterPro" id="IPR014729">
    <property type="entry name" value="Rossmann-like_a/b/a_fold"/>
</dbReference>
<dbReference type="NCBIfam" id="TIGR00364">
    <property type="entry name" value="7-cyano-7-deazaguanine synthase QueC"/>
    <property type="match status" value="1"/>
</dbReference>
<dbReference type="NCBIfam" id="NF008317">
    <property type="entry name" value="PRK11106.1"/>
    <property type="match status" value="1"/>
</dbReference>
<dbReference type="PANTHER" id="PTHR42914">
    <property type="entry name" value="7-CYANO-7-DEAZAGUANINE SYNTHASE"/>
    <property type="match status" value="1"/>
</dbReference>
<dbReference type="PANTHER" id="PTHR42914:SF1">
    <property type="entry name" value="7-CYANO-7-DEAZAGUANINE SYNTHASE"/>
    <property type="match status" value="1"/>
</dbReference>
<dbReference type="Pfam" id="PF06508">
    <property type="entry name" value="QueC"/>
    <property type="match status" value="1"/>
</dbReference>
<dbReference type="PIRSF" id="PIRSF006293">
    <property type="entry name" value="ExsB"/>
    <property type="match status" value="1"/>
</dbReference>
<dbReference type="SUPFAM" id="SSF52402">
    <property type="entry name" value="Adenine nucleotide alpha hydrolases-like"/>
    <property type="match status" value="1"/>
</dbReference>
<name>QUEC_SHEDO</name>
<organism>
    <name type="scientific">Shewanella denitrificans (strain OS217 / ATCC BAA-1090 / DSM 15013)</name>
    <dbReference type="NCBI Taxonomy" id="318161"/>
    <lineage>
        <taxon>Bacteria</taxon>
        <taxon>Pseudomonadati</taxon>
        <taxon>Pseudomonadota</taxon>
        <taxon>Gammaproteobacteria</taxon>
        <taxon>Alteromonadales</taxon>
        <taxon>Shewanellaceae</taxon>
        <taxon>Shewanella</taxon>
    </lineage>
</organism>
<protein>
    <recommendedName>
        <fullName evidence="1">7-cyano-7-deazaguanine synthase</fullName>
        <ecNumber evidence="1">6.3.4.20</ecNumber>
    </recommendedName>
    <alternativeName>
        <fullName evidence="1">7-cyano-7-carbaguanine synthase</fullName>
    </alternativeName>
    <alternativeName>
        <fullName evidence="1">PreQ(0) synthase</fullName>
    </alternativeName>
    <alternativeName>
        <fullName evidence="1">Queuosine biosynthesis protein QueC</fullName>
    </alternativeName>
</protein>
<evidence type="ECO:0000255" key="1">
    <source>
        <dbReference type="HAMAP-Rule" id="MF_01633"/>
    </source>
</evidence>